<protein>
    <recommendedName>
        <fullName>Toll-like receptor 4</fullName>
    </recommendedName>
    <cdAntigenName>CD284</cdAntigenName>
</protein>
<sequence>MMARARLAAALIPATAILSCLRTESWDPCVQVVPNISYQCMELNLYKIPDNIPISTKMLDLSFNYLRHLGSHNFSSFPELQVLDLSRCEIKIIEDDTFQGLNHLSTLILTGNPIQSLAWGAFSGLSSLQKLVAVETNLVSLNDFPIGHLKNLKELNVAHNFIHSFKLPEYFSNLPNLEHLDLSNNKIQNIYYEDVKVLHQMPLLNLSLDLSLNPLDFIEPGTFKEIKLNGLTLRSNFNSSHVMKTCIQGLAGLKTNRLVLGEFKNERKLQRFDRSFLEGLCNLTIEQFRIAYLDKFSGDDTDLFNCLANVSVISLLSISLGSLQALLKDFRWQHLEIINCDFDKFPALKLSSLKKFVFTDNKDISTFTEFQLPSLQYLDLKRNHLSFKGCCSHTDFGTTNLKHLDLSFNDVITLGSNFMGLEQLEHLDFQHSTLKQINAFSAFLSLRNLRYLDISYTNIRIVFHGIFTGLVSLQTLKMAGNSFQNNLLPDIFTELTNLTVLDLSKCQLEQVAQTAFHSLSSLQVLNMSHNKLLSLDTFLYEPLHSLRILDCSFNRIMASKEQELQNLPRSLTWLNLTQNAFACVCEHQSFLQWVKDQRQLLVGAEQMMCAEPLDMEDMPVLSFRNATCQLSKTIISVSVVTVLLVSVVGVLVYKFYFHLMLLAGCKKYGRGESIYDAFVIYSSQDEDWVRNELVKNLEEGVPPFQLCLHYRDFIPGVAIAANIIQEGFHKSRKVIVVVSQHFIQSRWCIFEYEIAQTWQFLSSRAGIIFIVLQKLEKSLLRQQVELYRLLSRNTYLEWEDSVLGRHVFWRRLRKALLAGKPQSPEGTADAETNPQEATTST</sequence>
<evidence type="ECO:0000250" key="1">
    <source>
        <dbReference type="UniProtKB" id="O00206"/>
    </source>
</evidence>
<evidence type="ECO:0000250" key="2">
    <source>
        <dbReference type="UniProtKB" id="Q9QUK6"/>
    </source>
</evidence>
<evidence type="ECO:0000255" key="3"/>
<evidence type="ECO:0000255" key="4">
    <source>
        <dbReference type="PROSITE-ProRule" id="PRU00204"/>
    </source>
</evidence>
<evidence type="ECO:0000256" key="5">
    <source>
        <dbReference type="SAM" id="MobiDB-lite"/>
    </source>
</evidence>
<evidence type="ECO:0000269" key="6">
    <source>
    </source>
</evidence>
<evidence type="ECO:0000305" key="7"/>
<evidence type="ECO:0000305" key="8">
    <source>
    </source>
</evidence>
<gene>
    <name type="primary">TLR4</name>
</gene>
<organism>
    <name type="scientific">Bos taurus</name>
    <name type="common">Bovine</name>
    <dbReference type="NCBI Taxonomy" id="9913"/>
    <lineage>
        <taxon>Eukaryota</taxon>
        <taxon>Metazoa</taxon>
        <taxon>Chordata</taxon>
        <taxon>Craniata</taxon>
        <taxon>Vertebrata</taxon>
        <taxon>Euteleostomi</taxon>
        <taxon>Mammalia</taxon>
        <taxon>Eutheria</taxon>
        <taxon>Laurasiatheria</taxon>
        <taxon>Artiodactyla</taxon>
        <taxon>Ruminantia</taxon>
        <taxon>Pecora</taxon>
        <taxon>Bovidae</taxon>
        <taxon>Bovinae</taxon>
        <taxon>Bos</taxon>
    </lineage>
</organism>
<dbReference type="EMBL" id="AF310952">
    <property type="protein sequence ID" value="AAG32061.2"/>
    <property type="molecule type" value="mRNA"/>
</dbReference>
<dbReference type="EMBL" id="AY634630">
    <property type="protein sequence ID" value="AAT48488.1"/>
    <property type="molecule type" value="mRNA"/>
</dbReference>
<dbReference type="EMBL" id="DQ839566">
    <property type="protein sequence ID" value="ABH09759.1"/>
    <property type="molecule type" value="mRNA"/>
</dbReference>
<dbReference type="RefSeq" id="NP_776623.5">
    <property type="nucleotide sequence ID" value="NM_174198.6"/>
</dbReference>
<dbReference type="SMR" id="Q9GL65"/>
<dbReference type="FunCoup" id="Q9GL65">
    <property type="interactions" value="441"/>
</dbReference>
<dbReference type="STRING" id="9913.ENSBTAP00000008190"/>
<dbReference type="GlyCosmos" id="Q9GL65">
    <property type="glycosylation" value="10 sites, No reported glycans"/>
</dbReference>
<dbReference type="GlyGen" id="Q9GL65">
    <property type="glycosylation" value="10 sites"/>
</dbReference>
<dbReference type="PaxDb" id="9913-ENSBTAP00000008190"/>
<dbReference type="GeneID" id="281536"/>
<dbReference type="KEGG" id="bta:281536"/>
<dbReference type="CTD" id="7099"/>
<dbReference type="eggNOG" id="KOG4641">
    <property type="taxonomic scope" value="Eukaryota"/>
</dbReference>
<dbReference type="InParanoid" id="Q9GL65"/>
<dbReference type="OrthoDB" id="1421090at2759"/>
<dbReference type="Proteomes" id="UP000009136">
    <property type="component" value="Unplaced"/>
</dbReference>
<dbReference type="GO" id="GO:0005769">
    <property type="term" value="C:early endosome"/>
    <property type="evidence" value="ECO:0007669"/>
    <property type="project" value="UniProtKB-SubCell"/>
</dbReference>
<dbReference type="GO" id="GO:0046696">
    <property type="term" value="C:lipopolysaccharide receptor complex"/>
    <property type="evidence" value="ECO:0000250"/>
    <property type="project" value="UniProtKB"/>
</dbReference>
<dbReference type="GO" id="GO:0005886">
    <property type="term" value="C:plasma membrane"/>
    <property type="evidence" value="ECO:0000250"/>
    <property type="project" value="UniProtKB"/>
</dbReference>
<dbReference type="GO" id="GO:0001726">
    <property type="term" value="C:ruffle"/>
    <property type="evidence" value="ECO:0007669"/>
    <property type="project" value="UniProtKB-SubCell"/>
</dbReference>
<dbReference type="GO" id="GO:0001530">
    <property type="term" value="F:lipopolysaccharide binding"/>
    <property type="evidence" value="ECO:0000318"/>
    <property type="project" value="GO_Central"/>
</dbReference>
<dbReference type="GO" id="GO:0001875">
    <property type="term" value="F:lipopolysaccharide immune receptor activity"/>
    <property type="evidence" value="ECO:0000250"/>
    <property type="project" value="UniProtKB"/>
</dbReference>
<dbReference type="GO" id="GO:0061809">
    <property type="term" value="F:NAD+ nucleosidase activity, cyclic ADP-ribose generating"/>
    <property type="evidence" value="ECO:0007669"/>
    <property type="project" value="UniProtKB-EC"/>
</dbReference>
<dbReference type="GO" id="GO:0004888">
    <property type="term" value="F:transmembrane signaling receptor activity"/>
    <property type="evidence" value="ECO:0007669"/>
    <property type="project" value="InterPro"/>
</dbReference>
<dbReference type="GO" id="GO:0050829">
    <property type="term" value="P:defense response to Gram-negative bacterium"/>
    <property type="evidence" value="ECO:0000318"/>
    <property type="project" value="GO_Central"/>
</dbReference>
<dbReference type="GO" id="GO:0032497">
    <property type="term" value="P:detection of lipopolysaccharide"/>
    <property type="evidence" value="ECO:0000250"/>
    <property type="project" value="UniProtKB"/>
</dbReference>
<dbReference type="GO" id="GO:0006954">
    <property type="term" value="P:inflammatory response"/>
    <property type="evidence" value="ECO:0000318"/>
    <property type="project" value="GO_Central"/>
</dbReference>
<dbReference type="GO" id="GO:0045087">
    <property type="term" value="P:innate immune response"/>
    <property type="evidence" value="ECO:0007669"/>
    <property type="project" value="UniProtKB-KW"/>
</dbReference>
<dbReference type="GO" id="GO:0042116">
    <property type="term" value="P:macrophage activation"/>
    <property type="evidence" value="ECO:0000250"/>
    <property type="project" value="UniProtKB"/>
</dbReference>
<dbReference type="GO" id="GO:0002755">
    <property type="term" value="P:MyD88-dependent toll-like receptor signaling pathway"/>
    <property type="evidence" value="ECO:0000318"/>
    <property type="project" value="GO_Central"/>
</dbReference>
<dbReference type="GO" id="GO:0032731">
    <property type="term" value="P:positive regulation of interleukin-1 beta production"/>
    <property type="evidence" value="ECO:0000250"/>
    <property type="project" value="UniProtKB"/>
</dbReference>
<dbReference type="GO" id="GO:1900227">
    <property type="term" value="P:positive regulation of NLRP3 inflammasome complex assembly"/>
    <property type="evidence" value="ECO:0000250"/>
    <property type="project" value="UniProtKB"/>
</dbReference>
<dbReference type="GO" id="GO:0034142">
    <property type="term" value="P:toll-like receptor 4 signaling pathway"/>
    <property type="evidence" value="ECO:0000318"/>
    <property type="project" value="GO_Central"/>
</dbReference>
<dbReference type="FunFam" id="3.40.50.10140:FF:000006">
    <property type="entry name" value="Toll-like receptor 4"/>
    <property type="match status" value="1"/>
</dbReference>
<dbReference type="FunFam" id="3.80.10.10:FF:000195">
    <property type="entry name" value="Toll-like receptor 4"/>
    <property type="match status" value="1"/>
</dbReference>
<dbReference type="Gene3D" id="3.80.10.10">
    <property type="entry name" value="Ribonuclease Inhibitor"/>
    <property type="match status" value="1"/>
</dbReference>
<dbReference type="Gene3D" id="3.40.50.10140">
    <property type="entry name" value="Toll/interleukin-1 receptor homology (TIR) domain"/>
    <property type="match status" value="1"/>
</dbReference>
<dbReference type="InterPro" id="IPR000483">
    <property type="entry name" value="Cys-rich_flank_reg_C"/>
</dbReference>
<dbReference type="InterPro" id="IPR001611">
    <property type="entry name" value="Leu-rich_rpt"/>
</dbReference>
<dbReference type="InterPro" id="IPR025875">
    <property type="entry name" value="Leu-rich_rpt_4"/>
</dbReference>
<dbReference type="InterPro" id="IPR003591">
    <property type="entry name" value="Leu-rich_rpt_typical-subtyp"/>
</dbReference>
<dbReference type="InterPro" id="IPR032675">
    <property type="entry name" value="LRR_dom_sf"/>
</dbReference>
<dbReference type="InterPro" id="IPR000157">
    <property type="entry name" value="TIR_dom"/>
</dbReference>
<dbReference type="InterPro" id="IPR017241">
    <property type="entry name" value="Toll-like_receptor"/>
</dbReference>
<dbReference type="InterPro" id="IPR035897">
    <property type="entry name" value="Toll_tir_struct_dom_sf"/>
</dbReference>
<dbReference type="PANTHER" id="PTHR24365">
    <property type="entry name" value="TOLL-LIKE RECEPTOR"/>
    <property type="match status" value="1"/>
</dbReference>
<dbReference type="PANTHER" id="PTHR24365:SF521">
    <property type="entry name" value="TOLL-LIKE RECEPTOR 4"/>
    <property type="match status" value="1"/>
</dbReference>
<dbReference type="Pfam" id="PF12799">
    <property type="entry name" value="LRR_4"/>
    <property type="match status" value="1"/>
</dbReference>
<dbReference type="Pfam" id="PF13855">
    <property type="entry name" value="LRR_8"/>
    <property type="match status" value="3"/>
</dbReference>
<dbReference type="Pfam" id="PF01582">
    <property type="entry name" value="TIR"/>
    <property type="match status" value="1"/>
</dbReference>
<dbReference type="PIRSF" id="PIRSF037595">
    <property type="entry name" value="Toll-like_receptor"/>
    <property type="match status" value="1"/>
</dbReference>
<dbReference type="PRINTS" id="PR00019">
    <property type="entry name" value="LEURICHRPT"/>
</dbReference>
<dbReference type="SMART" id="SM00365">
    <property type="entry name" value="LRR_SD22"/>
    <property type="match status" value="6"/>
</dbReference>
<dbReference type="SMART" id="SM00369">
    <property type="entry name" value="LRR_TYP"/>
    <property type="match status" value="13"/>
</dbReference>
<dbReference type="SMART" id="SM00082">
    <property type="entry name" value="LRRCT"/>
    <property type="match status" value="1"/>
</dbReference>
<dbReference type="SMART" id="SM00255">
    <property type="entry name" value="TIR"/>
    <property type="match status" value="1"/>
</dbReference>
<dbReference type="SUPFAM" id="SSF52047">
    <property type="entry name" value="RNI-like"/>
    <property type="match status" value="1"/>
</dbReference>
<dbReference type="SUPFAM" id="SSF52200">
    <property type="entry name" value="Toll/Interleukin receptor TIR domain"/>
    <property type="match status" value="1"/>
</dbReference>
<dbReference type="PROSITE" id="PS51450">
    <property type="entry name" value="LRR"/>
    <property type="match status" value="13"/>
</dbReference>
<dbReference type="PROSITE" id="PS50104">
    <property type="entry name" value="TIR"/>
    <property type="match status" value="1"/>
</dbReference>
<name>TLR4_BOVIN</name>
<comment type="function">
    <text evidence="1 6">Transmembrane receptor that functions as a pattern recognition receptor recognizing pathogen- and damage-associated molecular patterns (PAMPs and DAMPs) to induce innate immune responses via downstream signaling pathways. At the plasma membrane, cooperates with LY96 to mediate the innate immune response to bacterial lipopolysaccharide (LPS) (PubMed:17559944). Also involved in LPS-independent inflammatory responses triggered by free fatty acids, such as palmitate, and Ni(2+). Mechanistically, acts via MYD88, TIRAP and TRAF6, leading to NF-kappa-B activation, cytokine secretion and the inflammatory response. Alternatively, CD14-mediated TLR4 internalization via endocytosis is associated with the initiation of a MYD88-independent signaling via the TICAM1-TBK1-IRF3 axis leading to type I interferon production. In addition to the secretion of proinflammatory cytokines, initiates the activation of NLRP3 inflammasome and formation of a positive feedback loop between autophagy and NF-kappa-B signaling cascade. In complex with TLR6, promotes inflammation in monocytes/macrophages by associating with TLR6 and the receptor CD86. Upon ligand binding, such as oxLDL or amyloid-beta 42, the TLR4:TLR6 complex is internalized and triggers inflammatory response, leading to NF-kappa-B-dependent production of CXCL1, CXCL2 and CCL9 cytokines, via MYD88 signaling pathway, and CCL5 cytokine, via TICAM1 signaling pathway. In myeloid dendritic cells, vesicular stomatitis virus glycoprotein G but not LPS promotes the activation of IRF7, leading to type I IFN production in a CD14-dependent manner (By similarity).</text>
</comment>
<comment type="subunit">
    <text evidence="1 2 8">Belongs to the lipopolysaccharide (LPS) receptor, a multi-protein complex containing at least CD14, LY96 and TLR4 (PubMed:17559944). Binding to bacterial LPS leads to homodimerization. Interacts with LY96 via the extracellular domain. Interacts with MYD88 and TIRAP via their respective TIR domains. Interacts with TICAM2. Interacts with NOX4. Interacts with CNPY3 and HSP90B1; this interaction is required for proper folding in the endoplasmic reticulum. Interacts with MAP3K21; this interaction leads to negative regulation of TLR4 signaling. Interacts with CD36, following CD36 stimulation by oxLDL or amyloid-beta 42, and forms a heterodimer with TLR6. The trimeric complex is internalized and triggers inflammatory response. LYN kinase activity facilitates TLR4-TLR6 heterodimerization and signal initiation. Interacts with TICAM1 in response to LPS in a WDFY1-dependent manner (By similarity). Interacts with WDFY1 in response to LPS. Interacts with SMPDL3B (By similarity). Interacts with CEACAM1; upon lipopolysaccharide stimulation, forms a complex including TLR4 and the phosphorylated form of SYK and CEACAM1, which in turn, recruits PTPN6 that dephosphorylates SYK, reducing the production of reactive oxygen species (ROS) and lysosome disruption, which in turn, reduces the activity of the inflammasome (By similarity). Interacts with RFTN1; the interaction occurs in response to lipopolysaccharide stimulation (By similarity). Interacts with SCIMP; the interaction occurs in response to lipopolysaccharide stimulation and is enhanced by phosphorylation of SCIMP by LYN (By similarity). This interaction facilitates the phosphorylation of TLR4 by LYN which elicits a selective cytokine response in macrophages (By similarity). Interacts with TRAF3IP3 (By similarity). Interacts with TREM1; this interaction enhances TLR4-mediated inflammatory response (By similarity). Interacts with ZG16B/PAUF (By similarity). Interacts with CD82; this interaction inhibits TLR4-mediated signaling pathway (By similarity).</text>
</comment>
<comment type="subcellular location">
    <subcellularLocation>
        <location evidence="1 6">Cell membrane</location>
        <topology evidence="1">Single-pass type I membrane protein</topology>
    </subcellularLocation>
    <subcellularLocation>
        <location evidence="1">Early endosome</location>
    </subcellularLocation>
    <subcellularLocation>
        <location evidence="2">Cell projection</location>
        <location evidence="2">Ruffle</location>
    </subcellularLocation>
    <text evidence="1">Upon complex formation with CD36 and TLR6, internalized through dynamin-dependent endocytosis. Colocalizes with RFTN1 at cell membrane and then together with RFTN1 moves to endosomes, upon lipopolysaccharide stimulation.</text>
</comment>
<comment type="domain">
    <text evidence="1">The TIR domain mediates interaction with NOX4.</text>
</comment>
<comment type="PTM">
    <text evidence="2">Phosphorylated on tyrosine residues by LYN after binding lipopolysaccharide.</text>
</comment>
<comment type="PTM">
    <text evidence="1">Ubiquitinated by RNF128 via 'Lys-28'-linked polyubiquitin chains, leading to proteasomal degradation.</text>
</comment>
<comment type="similarity">
    <text evidence="7">Belongs to the Toll-like receptor family.</text>
</comment>
<comment type="caution">
    <text evidence="1 7">In some plant proteins and in human SARM1, the TIR domain has NAD(+) hydrolase (NADase) activity (By similarity). However, despite the presence of the catalytic Asp residue, the isolated TIR domain of human TLR4 lacks NADase activity (By similarity). Based on this, it is unlikely that Toll-like receptors have NADase activity.</text>
</comment>
<proteinExistence type="evidence at protein level"/>
<reference key="1">
    <citation type="submission" date="2001-11" db="EMBL/GenBank/DDBJ databases">
        <title>Bovine Toll-like receptor 4 (TLR4).</title>
        <authorList>
            <person name="Guionaud C.T."/>
            <person name="Dubey C."/>
            <person name="Jungi T.W."/>
        </authorList>
    </citation>
    <scope>NUCLEOTIDE SEQUENCE [MRNA]</scope>
</reference>
<reference key="2">
    <citation type="submission" date="2004-05" db="EMBL/GenBank/DDBJ databases">
        <title>Role of bovine TLRs in antigen presentation.</title>
        <authorList>
            <person name="Werling D."/>
            <person name="McGuire K."/>
            <person name="Glass E."/>
        </authorList>
    </citation>
    <scope>NUCLEOTIDE SEQUENCE [MRNA]</scope>
</reference>
<reference key="3">
    <citation type="submission" date="2006-07" db="EMBL/GenBank/DDBJ databases">
        <title>cDNA cloning and sequence analysis of signalling molecules on bovine toll-like receptors.</title>
        <authorList>
            <person name="Wang X.P."/>
            <person name="Xu S.Z."/>
            <person name="Gao X."/>
            <person name="Ma T.H."/>
            <person name="Ren H.Y."/>
            <person name="Chen J.B."/>
        </authorList>
    </citation>
    <scope>NUCLEOTIDE SEQUENCE [MRNA]</scope>
    <source>
        <tissue>Mammary gland</tissue>
    </source>
</reference>
<reference key="4">
    <citation type="journal article" date="2007" name="Vet. Immunol. Immunopathol.">
        <title>Stable transduction of bovine TLR4 and bovine MD-2 into LPS-nonresponsive cells and soluble CD14 promote the ability to respond to LPS.</title>
        <authorList>
            <person name="Sauter K.S."/>
            <person name="Brcic M."/>
            <person name="Franchini M."/>
            <person name="Jungi T.W."/>
        </authorList>
    </citation>
    <scope>FUNCTION</scope>
    <scope>SUBCELLULAR LOCATION</scope>
    <scope>SUBUNIT</scope>
</reference>
<feature type="signal peptide" evidence="3">
    <location>
        <begin position="1"/>
        <end position="23"/>
    </location>
</feature>
<feature type="chain" id="PRO_0000034717" description="Toll-like receptor 4">
    <location>
        <begin position="24"/>
        <end position="841"/>
    </location>
</feature>
<feature type="topological domain" description="Extracellular" evidence="3">
    <location>
        <begin position="24"/>
        <end position="632"/>
    </location>
</feature>
<feature type="transmembrane region" description="Helical" evidence="3">
    <location>
        <begin position="633"/>
        <end position="653"/>
    </location>
</feature>
<feature type="topological domain" description="Cytoplasmic" evidence="3">
    <location>
        <begin position="654"/>
        <end position="841"/>
    </location>
</feature>
<feature type="repeat" description="LRR 1">
    <location>
        <begin position="55"/>
        <end position="76"/>
    </location>
</feature>
<feature type="repeat" description="LRR 2">
    <location>
        <begin position="79"/>
        <end position="100"/>
    </location>
</feature>
<feature type="repeat" description="LRR 3">
    <location>
        <begin position="103"/>
        <end position="124"/>
    </location>
</feature>
<feature type="repeat" description="LRR 4">
    <location>
        <begin position="127"/>
        <end position="148"/>
    </location>
</feature>
<feature type="repeat" description="LRR 5">
    <location>
        <begin position="151"/>
        <end position="172"/>
    </location>
</feature>
<feature type="repeat" description="LRR 6">
    <location>
        <begin position="176"/>
        <end position="197"/>
    </location>
</feature>
<feature type="repeat" description="LRR 7">
    <location>
        <begin position="205"/>
        <end position="225"/>
    </location>
</feature>
<feature type="repeat" description="LRR 8">
    <location>
        <begin position="352"/>
        <end position="373"/>
    </location>
</feature>
<feature type="repeat" description="LRR 9">
    <location>
        <begin position="374"/>
        <end position="394"/>
    </location>
</feature>
<feature type="repeat" description="LRR 10">
    <location>
        <begin position="400"/>
        <end position="422"/>
    </location>
</feature>
<feature type="repeat" description="LRR 11">
    <location>
        <begin position="423"/>
        <end position="444"/>
    </location>
</feature>
<feature type="repeat" description="LRR 12">
    <location>
        <begin position="448"/>
        <end position="469"/>
    </location>
</feature>
<feature type="repeat" description="LRR 13">
    <location>
        <begin position="472"/>
        <end position="495"/>
    </location>
</feature>
<feature type="repeat" description="LRR 14">
    <location>
        <begin position="497"/>
        <end position="518"/>
    </location>
</feature>
<feature type="repeat" description="LRR 15">
    <location>
        <begin position="521"/>
        <end position="542"/>
    </location>
</feature>
<feature type="repeat" description="LRR 16">
    <location>
        <begin position="545"/>
        <end position="568"/>
    </location>
</feature>
<feature type="domain" description="LRRCT">
    <location>
        <begin position="579"/>
        <end position="630"/>
    </location>
</feature>
<feature type="domain" description="TIR" evidence="4">
    <location>
        <begin position="673"/>
        <end position="816"/>
    </location>
</feature>
<feature type="region of interest" description="Disordered" evidence="5">
    <location>
        <begin position="820"/>
        <end position="841"/>
    </location>
</feature>
<feature type="compositionally biased region" description="Polar residues" evidence="5">
    <location>
        <begin position="830"/>
        <end position="841"/>
    </location>
</feature>
<feature type="glycosylation site" description="N-linked (GlcNAc...) asparagine" evidence="3">
    <location>
        <position position="35"/>
    </location>
</feature>
<feature type="glycosylation site" description="N-linked (GlcNAc...) asparagine" evidence="3">
    <location>
        <position position="73"/>
    </location>
</feature>
<feature type="glycosylation site" description="N-linked (GlcNAc...) asparagine" evidence="3">
    <location>
        <position position="205"/>
    </location>
</feature>
<feature type="glycosylation site" description="N-linked (GlcNAc...) asparagine" evidence="3">
    <location>
        <position position="238"/>
    </location>
</feature>
<feature type="glycosylation site" description="N-linked (GlcNAc...) asparagine" evidence="3">
    <location>
        <position position="282"/>
    </location>
</feature>
<feature type="glycosylation site" description="N-linked (GlcNAc...) asparagine" evidence="3">
    <location>
        <position position="309"/>
    </location>
</feature>
<feature type="glycosylation site" description="N-linked (GlcNAc...) asparagine" evidence="3">
    <location>
        <position position="497"/>
    </location>
</feature>
<feature type="glycosylation site" description="N-linked (GlcNAc...) asparagine" evidence="3">
    <location>
        <position position="526"/>
    </location>
</feature>
<feature type="glycosylation site" description="N-linked (GlcNAc...) asparagine" evidence="3">
    <location>
        <position position="575"/>
    </location>
</feature>
<feature type="glycosylation site" description="N-linked (GlcNAc...) asparagine" evidence="3">
    <location>
        <position position="625"/>
    </location>
</feature>
<feature type="disulfide bond" evidence="1">
    <location>
        <begin position="29"/>
        <end position="40"/>
    </location>
</feature>
<feature type="disulfide bond" evidence="1">
    <location>
        <begin position="281"/>
        <end position="306"/>
    </location>
</feature>
<feature type="disulfide bond" evidence="1">
    <location>
        <begin position="390"/>
        <end position="391"/>
    </location>
</feature>
<feature type="disulfide bond" evidence="1">
    <location>
        <begin position="583"/>
        <end position="609"/>
    </location>
</feature>
<feature type="disulfide bond" evidence="1">
    <location>
        <begin position="585"/>
        <end position="628"/>
    </location>
</feature>
<keyword id="KW-1003">Cell membrane</keyword>
<keyword id="KW-0966">Cell projection</keyword>
<keyword id="KW-1015">Disulfide bond</keyword>
<keyword id="KW-0967">Endosome</keyword>
<keyword id="KW-0325">Glycoprotein</keyword>
<keyword id="KW-0391">Immunity</keyword>
<keyword id="KW-0395">Inflammatory response</keyword>
<keyword id="KW-0399">Innate immunity</keyword>
<keyword id="KW-0433">Leucine-rich repeat</keyword>
<keyword id="KW-0472">Membrane</keyword>
<keyword id="KW-0520">NAD</keyword>
<keyword id="KW-0675">Receptor</keyword>
<keyword id="KW-1185">Reference proteome</keyword>
<keyword id="KW-0677">Repeat</keyword>
<keyword id="KW-0732">Signal</keyword>
<keyword id="KW-0812">Transmembrane</keyword>
<keyword id="KW-1133">Transmembrane helix</keyword>
<keyword id="KW-0832">Ubl conjugation</keyword>
<accession>Q9GL65</accession>
<accession>Q0MW16</accession>
<accession>Q6GV19</accession>